<comment type="function">
    <text>Probably regulates the activity of the caudal neurosecretory system. Binds two calcium ions.</text>
</comment>
<comment type="similarity">
    <text evidence="2">Belongs to the parvalbumin family.</text>
</comment>
<proteinExistence type="evidence at protein level"/>
<organism>
    <name type="scientific">Scyliorhinus canicula</name>
    <name type="common">Small-spotted catshark</name>
    <name type="synonym">Squalus canicula</name>
    <dbReference type="NCBI Taxonomy" id="7830"/>
    <lineage>
        <taxon>Eukaryota</taxon>
        <taxon>Metazoa</taxon>
        <taxon>Chordata</taxon>
        <taxon>Craniata</taxon>
        <taxon>Vertebrata</taxon>
        <taxon>Chondrichthyes</taxon>
        <taxon>Elasmobranchii</taxon>
        <taxon>Galeomorphii</taxon>
        <taxon>Galeoidea</taxon>
        <taxon>Carcharhiniformes</taxon>
        <taxon>Scyliorhinidae</taxon>
        <taxon>Scyliorhinus</taxon>
    </lineage>
</organism>
<sequence length="50" mass="5558">PMTKVLNAADISKALNAFEAPGSFDHKKFFQLVGLKGKTHEQVKKVFNIL</sequence>
<name>PRVM_SCYCA</name>
<evidence type="ECO:0000255" key="1">
    <source>
        <dbReference type="PROSITE-ProRule" id="PRU00448"/>
    </source>
</evidence>
<evidence type="ECO:0000305" key="2"/>
<reference key="1">
    <citation type="journal article" date="1992" name="Neuroendocrinology">
        <title>Purification and characterization of urotensin II and parvalbumin from an elasmobranch fish, Scyliorhinus canicula (common dogfish).</title>
        <authorList>
            <person name="Conlon J.M."/>
            <person name="O'Harte F."/>
            <person name="Smith D.D."/>
            <person name="Balment R.J."/>
            <person name="Hazon N."/>
        </authorList>
    </citation>
    <scope>PROTEIN SEQUENCE</scope>
    <source>
        <tissue>Spinal cord</tissue>
    </source>
</reference>
<keyword id="KW-0106">Calcium</keyword>
<keyword id="KW-0903">Direct protein sequencing</keyword>
<keyword id="KW-0479">Metal-binding</keyword>
<keyword id="KW-0514">Muscle protein</keyword>
<keyword id="KW-0677">Repeat</keyword>
<accession>P35491</accession>
<protein>
    <recommendedName>
        <fullName>Parvalbumin</fullName>
    </recommendedName>
</protein>
<feature type="chain" id="PRO_0000073624" description="Parvalbumin">
    <location>
        <begin position="1"/>
        <end position="50" status="greater than"/>
    </location>
</feature>
<feature type="domain" description="EF-hand" evidence="1">
    <location>
        <begin position="38"/>
        <end position="50" status="greater than"/>
    </location>
</feature>
<feature type="non-terminal residue">
    <location>
        <position position="50"/>
    </location>
</feature>
<dbReference type="SMR" id="P35491"/>
<dbReference type="GO" id="GO:0005737">
    <property type="term" value="C:cytoplasm"/>
    <property type="evidence" value="ECO:0007669"/>
    <property type="project" value="TreeGrafter"/>
</dbReference>
<dbReference type="GO" id="GO:0005509">
    <property type="term" value="F:calcium ion binding"/>
    <property type="evidence" value="ECO:0007669"/>
    <property type="project" value="InterPro"/>
</dbReference>
<dbReference type="Gene3D" id="1.10.238.10">
    <property type="entry name" value="EF-hand"/>
    <property type="match status" value="1"/>
</dbReference>
<dbReference type="InterPro" id="IPR008080">
    <property type="entry name" value="Parvalbumin"/>
</dbReference>
<dbReference type="PANTHER" id="PTHR11653">
    <property type="entry name" value="PARVALBUMIN ALPHA"/>
    <property type="match status" value="1"/>
</dbReference>
<dbReference type="PANTHER" id="PTHR11653:SF2">
    <property type="entry name" value="PARVALBUMIN ALPHA"/>
    <property type="match status" value="1"/>
</dbReference>